<sequence length="236" mass="27649">MEADVQRAQQAQLEKGSSVPPWTGIPLQKGLGQRLRQHVNPLQAQYQQPTPPPHWERVYRRLGQPLHLDIGSGSGRFLLRMAQEQPDWNFLGVEIRQPLVERANAWRDELGLDNVHFLFANINVSLRHLFAPGDLSRVTIQFPDPWFKKRHHKRRIVQPRLVADLALLLQPGSPVFLQSDVREVAEEMVDRFLEHPQFWNPYQGPIDDNPFGIPTEREWQCLQLGLPIYRYWLERR</sequence>
<name>TRMB_SYNJA</name>
<dbReference type="EC" id="2.1.1.33" evidence="2"/>
<dbReference type="EMBL" id="CP000239">
    <property type="protein sequence ID" value="ABD00783.1"/>
    <property type="molecule type" value="Genomic_DNA"/>
</dbReference>
<dbReference type="SMR" id="Q2JRH1"/>
<dbReference type="STRING" id="321327.CYA_2671"/>
<dbReference type="KEGG" id="cya:CYA_2671"/>
<dbReference type="eggNOG" id="COG0220">
    <property type="taxonomic scope" value="Bacteria"/>
</dbReference>
<dbReference type="HOGENOM" id="CLU_050910_1_3_3"/>
<dbReference type="OrthoDB" id="9802090at2"/>
<dbReference type="UniPathway" id="UPA00989"/>
<dbReference type="Proteomes" id="UP000008818">
    <property type="component" value="Chromosome"/>
</dbReference>
<dbReference type="GO" id="GO:0043527">
    <property type="term" value="C:tRNA methyltransferase complex"/>
    <property type="evidence" value="ECO:0007669"/>
    <property type="project" value="TreeGrafter"/>
</dbReference>
<dbReference type="GO" id="GO:0008176">
    <property type="term" value="F:tRNA (guanine(46)-N7)-methyltransferase activity"/>
    <property type="evidence" value="ECO:0007669"/>
    <property type="project" value="UniProtKB-UniRule"/>
</dbReference>
<dbReference type="CDD" id="cd02440">
    <property type="entry name" value="AdoMet_MTases"/>
    <property type="match status" value="1"/>
</dbReference>
<dbReference type="Gene3D" id="3.40.50.150">
    <property type="entry name" value="Vaccinia Virus protein VP39"/>
    <property type="match status" value="1"/>
</dbReference>
<dbReference type="HAMAP" id="MF_01057">
    <property type="entry name" value="tRNA_methyltr_TrmB"/>
    <property type="match status" value="1"/>
</dbReference>
<dbReference type="InterPro" id="IPR029063">
    <property type="entry name" value="SAM-dependent_MTases_sf"/>
</dbReference>
<dbReference type="InterPro" id="IPR003358">
    <property type="entry name" value="tRNA_(Gua-N-7)_MeTrfase_Trmb"/>
</dbReference>
<dbReference type="InterPro" id="IPR055361">
    <property type="entry name" value="tRNA_methyltr_TrmB_bact"/>
</dbReference>
<dbReference type="NCBIfam" id="TIGR00091">
    <property type="entry name" value="tRNA (guanosine(46)-N7)-methyltransferase TrmB"/>
    <property type="match status" value="1"/>
</dbReference>
<dbReference type="PANTHER" id="PTHR23417">
    <property type="entry name" value="3-DEOXY-D-MANNO-OCTULOSONIC-ACID TRANSFERASE/TRNA GUANINE-N 7 - -METHYLTRANSFERASE"/>
    <property type="match status" value="1"/>
</dbReference>
<dbReference type="PANTHER" id="PTHR23417:SF21">
    <property type="entry name" value="TRNA (GUANINE-N(7)-)-METHYLTRANSFERASE"/>
    <property type="match status" value="1"/>
</dbReference>
<dbReference type="Pfam" id="PF02390">
    <property type="entry name" value="Methyltransf_4"/>
    <property type="match status" value="1"/>
</dbReference>
<dbReference type="SUPFAM" id="SSF53335">
    <property type="entry name" value="S-adenosyl-L-methionine-dependent methyltransferases"/>
    <property type="match status" value="1"/>
</dbReference>
<dbReference type="PROSITE" id="PS51625">
    <property type="entry name" value="SAM_MT_TRMB"/>
    <property type="match status" value="1"/>
</dbReference>
<comment type="function">
    <text evidence="2">Catalyzes the formation of N(7)-methylguanine at position 46 (m7G46) in tRNA.</text>
</comment>
<comment type="catalytic activity">
    <reaction evidence="2">
        <text>guanosine(46) in tRNA + S-adenosyl-L-methionine = N(7)-methylguanosine(46) in tRNA + S-adenosyl-L-homocysteine</text>
        <dbReference type="Rhea" id="RHEA:42708"/>
        <dbReference type="Rhea" id="RHEA-COMP:10188"/>
        <dbReference type="Rhea" id="RHEA-COMP:10189"/>
        <dbReference type="ChEBI" id="CHEBI:57856"/>
        <dbReference type="ChEBI" id="CHEBI:59789"/>
        <dbReference type="ChEBI" id="CHEBI:74269"/>
        <dbReference type="ChEBI" id="CHEBI:74480"/>
        <dbReference type="EC" id="2.1.1.33"/>
    </reaction>
</comment>
<comment type="pathway">
    <text evidence="2">tRNA modification; N(7)-methylguanine-tRNA biosynthesis.</text>
</comment>
<comment type="similarity">
    <text evidence="2">Belongs to the class I-like SAM-binding methyltransferase superfamily. TrmB family.</text>
</comment>
<organism>
    <name type="scientific">Synechococcus sp. (strain JA-3-3Ab)</name>
    <name type="common">Cyanobacteria bacterium Yellowstone A-Prime</name>
    <dbReference type="NCBI Taxonomy" id="321327"/>
    <lineage>
        <taxon>Bacteria</taxon>
        <taxon>Bacillati</taxon>
        <taxon>Cyanobacteriota</taxon>
        <taxon>Cyanophyceae</taxon>
        <taxon>Synechococcales</taxon>
        <taxon>Synechococcaceae</taxon>
        <taxon>Synechococcus</taxon>
    </lineage>
</organism>
<reference key="1">
    <citation type="journal article" date="2007" name="ISME J.">
        <title>Population level functional diversity in a microbial community revealed by comparative genomic and metagenomic analyses.</title>
        <authorList>
            <person name="Bhaya D."/>
            <person name="Grossman A.R."/>
            <person name="Steunou A.-S."/>
            <person name="Khuri N."/>
            <person name="Cohan F.M."/>
            <person name="Hamamura N."/>
            <person name="Melendrez M.C."/>
            <person name="Bateson M.M."/>
            <person name="Ward D.M."/>
            <person name="Heidelberg J.F."/>
        </authorList>
    </citation>
    <scope>NUCLEOTIDE SEQUENCE [LARGE SCALE GENOMIC DNA]</scope>
    <source>
        <strain>JA-3-3Ab</strain>
    </source>
</reference>
<evidence type="ECO:0000250" key="1"/>
<evidence type="ECO:0000255" key="2">
    <source>
        <dbReference type="HAMAP-Rule" id="MF_01057"/>
    </source>
</evidence>
<evidence type="ECO:0000256" key="3">
    <source>
        <dbReference type="SAM" id="MobiDB-lite"/>
    </source>
</evidence>
<proteinExistence type="inferred from homology"/>
<gene>
    <name evidence="2" type="primary">trmB</name>
    <name type="ordered locus">CYA_2671</name>
</gene>
<accession>Q2JRH1</accession>
<protein>
    <recommendedName>
        <fullName evidence="2">tRNA (guanine-N(7)-)-methyltransferase</fullName>
        <ecNumber evidence="2">2.1.1.33</ecNumber>
    </recommendedName>
    <alternativeName>
        <fullName evidence="2">tRNA (guanine(46)-N(7))-methyltransferase</fullName>
    </alternativeName>
    <alternativeName>
        <fullName evidence="2">tRNA(m7G46)-methyltransferase</fullName>
    </alternativeName>
</protein>
<keyword id="KW-0489">Methyltransferase</keyword>
<keyword id="KW-0949">S-adenosyl-L-methionine</keyword>
<keyword id="KW-0808">Transferase</keyword>
<keyword id="KW-0819">tRNA processing</keyword>
<feature type="chain" id="PRO_0000288246" description="tRNA (guanine-N(7)-)-methyltransferase">
    <location>
        <begin position="1"/>
        <end position="236"/>
    </location>
</feature>
<feature type="region of interest" description="Disordered" evidence="3">
    <location>
        <begin position="1"/>
        <end position="23"/>
    </location>
</feature>
<feature type="active site" evidence="1">
    <location>
        <position position="144"/>
    </location>
</feature>
<feature type="binding site" evidence="2">
    <location>
        <position position="69"/>
    </location>
    <ligand>
        <name>S-adenosyl-L-methionine</name>
        <dbReference type="ChEBI" id="CHEBI:59789"/>
    </ligand>
</feature>
<feature type="binding site" evidence="2">
    <location>
        <position position="94"/>
    </location>
    <ligand>
        <name>S-adenosyl-L-methionine</name>
        <dbReference type="ChEBI" id="CHEBI:59789"/>
    </ligand>
</feature>
<feature type="binding site" evidence="2">
    <location>
        <position position="121"/>
    </location>
    <ligand>
        <name>S-adenosyl-L-methionine</name>
        <dbReference type="ChEBI" id="CHEBI:59789"/>
    </ligand>
</feature>
<feature type="binding site" evidence="2">
    <location>
        <position position="144"/>
    </location>
    <ligand>
        <name>S-adenosyl-L-methionine</name>
        <dbReference type="ChEBI" id="CHEBI:59789"/>
    </ligand>
</feature>
<feature type="binding site" evidence="2">
    <location>
        <position position="148"/>
    </location>
    <ligand>
        <name>substrate</name>
    </ligand>
</feature>
<feature type="binding site" evidence="2">
    <location>
        <position position="180"/>
    </location>
    <ligand>
        <name>substrate</name>
    </ligand>
</feature>